<evidence type="ECO:0000255" key="1">
    <source>
        <dbReference type="HAMAP-Rule" id="MF_00075"/>
    </source>
</evidence>
<proteinExistence type="inferred from homology"/>
<comment type="function">
    <text evidence="1">One of the essential components for the initiation of protein synthesis. Stabilizes the binding of IF-2 and IF-3 on the 30S subunit to which N-formylmethionyl-tRNA(fMet) subsequently binds. Helps modulate mRNA selection, yielding the 30S pre-initiation complex (PIC). Upon addition of the 50S ribosomal subunit IF-1, IF-2 and IF-3 are released leaving the mature 70S translation initiation complex.</text>
</comment>
<comment type="subunit">
    <text evidence="1">Component of the 30S ribosomal translation pre-initiation complex which assembles on the 30S ribosome in the order IF-2 and IF-3, IF-1 and N-formylmethionyl-tRNA(fMet); mRNA recruitment can occur at any time during PIC assembly.</text>
</comment>
<comment type="subcellular location">
    <subcellularLocation>
        <location evidence="1">Cytoplasm</location>
    </subcellularLocation>
</comment>
<comment type="similarity">
    <text evidence="1">Belongs to the IF-1 family.</text>
</comment>
<feature type="chain" id="PRO_0000263781" description="Translation initiation factor IF-1">
    <location>
        <begin position="1"/>
        <end position="73"/>
    </location>
</feature>
<feature type="domain" description="S1-like" evidence="1">
    <location>
        <begin position="1"/>
        <end position="73"/>
    </location>
</feature>
<protein>
    <recommendedName>
        <fullName evidence="1">Translation initiation factor IF-1</fullName>
    </recommendedName>
</protein>
<accession>Q3KM39</accession>
<keyword id="KW-0963">Cytoplasm</keyword>
<keyword id="KW-0396">Initiation factor</keyword>
<keyword id="KW-0648">Protein biosynthesis</keyword>
<keyword id="KW-0694">RNA-binding</keyword>
<keyword id="KW-0699">rRNA-binding</keyword>
<sequence length="73" mass="8413">MAKKEDTIVLEGRVEELLPGMHFRVMLENGVPITAHLCGKMRMSNIRLLVGDRVTVEMSTYDLTKARVVYRHR</sequence>
<reference key="1">
    <citation type="journal article" date="2005" name="Infect. Immun.">
        <title>Comparative genomic analysis of Chlamydia trachomatis oculotropic and genitotropic strains.</title>
        <authorList>
            <person name="Carlson J.H."/>
            <person name="Porcella S.F."/>
            <person name="McClarty G."/>
            <person name="Caldwell H.D."/>
        </authorList>
    </citation>
    <scope>NUCLEOTIDE SEQUENCE [LARGE SCALE GENOMIC DNA]</scope>
    <source>
        <strain>ATCC VR-571B / DSM 19440 / HAR-13</strain>
    </source>
</reference>
<organism>
    <name type="scientific">Chlamydia trachomatis serovar A (strain ATCC VR-571B / DSM 19440 / HAR-13)</name>
    <dbReference type="NCBI Taxonomy" id="315277"/>
    <lineage>
        <taxon>Bacteria</taxon>
        <taxon>Pseudomonadati</taxon>
        <taxon>Chlamydiota</taxon>
        <taxon>Chlamydiia</taxon>
        <taxon>Chlamydiales</taxon>
        <taxon>Chlamydiaceae</taxon>
        <taxon>Chlamydia/Chlamydophila group</taxon>
        <taxon>Chlamydia</taxon>
    </lineage>
</organism>
<name>IF1_CHLTA</name>
<dbReference type="EMBL" id="CP000051">
    <property type="protein sequence ID" value="AAX50583.1"/>
    <property type="molecule type" value="Genomic_DNA"/>
</dbReference>
<dbReference type="RefSeq" id="WP_009871670.1">
    <property type="nucleotide sequence ID" value="NC_007429.1"/>
</dbReference>
<dbReference type="SMR" id="Q3KM39"/>
<dbReference type="GeneID" id="93065146"/>
<dbReference type="KEGG" id="cta:CTA_0347"/>
<dbReference type="HOGENOM" id="CLU_151267_1_0_0"/>
<dbReference type="Proteomes" id="UP000002532">
    <property type="component" value="Chromosome"/>
</dbReference>
<dbReference type="GO" id="GO:0005829">
    <property type="term" value="C:cytosol"/>
    <property type="evidence" value="ECO:0007669"/>
    <property type="project" value="TreeGrafter"/>
</dbReference>
<dbReference type="GO" id="GO:0043022">
    <property type="term" value="F:ribosome binding"/>
    <property type="evidence" value="ECO:0007669"/>
    <property type="project" value="UniProtKB-UniRule"/>
</dbReference>
<dbReference type="GO" id="GO:0019843">
    <property type="term" value="F:rRNA binding"/>
    <property type="evidence" value="ECO:0007669"/>
    <property type="project" value="UniProtKB-UniRule"/>
</dbReference>
<dbReference type="GO" id="GO:0003743">
    <property type="term" value="F:translation initiation factor activity"/>
    <property type="evidence" value="ECO:0007669"/>
    <property type="project" value="UniProtKB-UniRule"/>
</dbReference>
<dbReference type="CDD" id="cd04451">
    <property type="entry name" value="S1_IF1"/>
    <property type="match status" value="1"/>
</dbReference>
<dbReference type="FunFam" id="2.40.50.140:FF:000002">
    <property type="entry name" value="Translation initiation factor IF-1"/>
    <property type="match status" value="1"/>
</dbReference>
<dbReference type="Gene3D" id="2.40.50.140">
    <property type="entry name" value="Nucleic acid-binding proteins"/>
    <property type="match status" value="1"/>
</dbReference>
<dbReference type="HAMAP" id="MF_00075">
    <property type="entry name" value="IF_1"/>
    <property type="match status" value="1"/>
</dbReference>
<dbReference type="InterPro" id="IPR012340">
    <property type="entry name" value="NA-bd_OB-fold"/>
</dbReference>
<dbReference type="InterPro" id="IPR006196">
    <property type="entry name" value="RNA-binding_domain_S1_IF1"/>
</dbReference>
<dbReference type="InterPro" id="IPR003029">
    <property type="entry name" value="S1_domain"/>
</dbReference>
<dbReference type="InterPro" id="IPR004368">
    <property type="entry name" value="TIF_IF1"/>
</dbReference>
<dbReference type="NCBIfam" id="TIGR00008">
    <property type="entry name" value="infA"/>
    <property type="match status" value="1"/>
</dbReference>
<dbReference type="PANTHER" id="PTHR33370">
    <property type="entry name" value="TRANSLATION INITIATION FACTOR IF-1, CHLOROPLASTIC"/>
    <property type="match status" value="1"/>
</dbReference>
<dbReference type="PANTHER" id="PTHR33370:SF1">
    <property type="entry name" value="TRANSLATION INITIATION FACTOR IF-1, CHLOROPLASTIC"/>
    <property type="match status" value="1"/>
</dbReference>
<dbReference type="Pfam" id="PF01176">
    <property type="entry name" value="eIF-1a"/>
    <property type="match status" value="1"/>
</dbReference>
<dbReference type="SMART" id="SM00316">
    <property type="entry name" value="S1"/>
    <property type="match status" value="1"/>
</dbReference>
<dbReference type="SUPFAM" id="SSF50249">
    <property type="entry name" value="Nucleic acid-binding proteins"/>
    <property type="match status" value="1"/>
</dbReference>
<dbReference type="PROSITE" id="PS50832">
    <property type="entry name" value="S1_IF1_TYPE"/>
    <property type="match status" value="1"/>
</dbReference>
<gene>
    <name evidence="1" type="primary">infA</name>
    <name type="ordered locus">CTA_0347</name>
</gene>